<reference key="1">
    <citation type="journal article" date="2005" name="Nature">
        <title>Sequencing of Aspergillus nidulans and comparative analysis with A. fumigatus and A. oryzae.</title>
        <authorList>
            <person name="Galagan J.E."/>
            <person name="Calvo S.E."/>
            <person name="Cuomo C."/>
            <person name="Ma L.-J."/>
            <person name="Wortman J.R."/>
            <person name="Batzoglou S."/>
            <person name="Lee S.-I."/>
            <person name="Bastuerkmen M."/>
            <person name="Spevak C.C."/>
            <person name="Clutterbuck J."/>
            <person name="Kapitonov V."/>
            <person name="Jurka J."/>
            <person name="Scazzocchio C."/>
            <person name="Farman M.L."/>
            <person name="Butler J."/>
            <person name="Purcell S."/>
            <person name="Harris S."/>
            <person name="Braus G.H."/>
            <person name="Draht O."/>
            <person name="Busch S."/>
            <person name="D'Enfert C."/>
            <person name="Bouchier C."/>
            <person name="Goldman G.H."/>
            <person name="Bell-Pedersen D."/>
            <person name="Griffiths-Jones S."/>
            <person name="Doonan J.H."/>
            <person name="Yu J."/>
            <person name="Vienken K."/>
            <person name="Pain A."/>
            <person name="Freitag M."/>
            <person name="Selker E.U."/>
            <person name="Archer D.B."/>
            <person name="Penalva M.A."/>
            <person name="Oakley B.R."/>
            <person name="Momany M."/>
            <person name="Tanaka T."/>
            <person name="Kumagai T."/>
            <person name="Asai K."/>
            <person name="Machida M."/>
            <person name="Nierman W.C."/>
            <person name="Denning D.W."/>
            <person name="Caddick M.X."/>
            <person name="Hynes M."/>
            <person name="Paoletti M."/>
            <person name="Fischer R."/>
            <person name="Miller B.L."/>
            <person name="Dyer P.S."/>
            <person name="Sachs M.S."/>
            <person name="Osmani S.A."/>
            <person name="Birren B.W."/>
        </authorList>
    </citation>
    <scope>NUCLEOTIDE SEQUENCE [LARGE SCALE GENOMIC DNA]</scope>
    <source>
        <strain>FGSC A4 / ATCC 38163 / CBS 112.46 / NRRL 194 / M139</strain>
    </source>
</reference>
<reference key="2">
    <citation type="journal article" date="2009" name="Fungal Genet. Biol.">
        <title>The 2008 update of the Aspergillus nidulans genome annotation: a community effort.</title>
        <authorList>
            <person name="Wortman J.R."/>
            <person name="Gilsenan J.M."/>
            <person name="Joardar V."/>
            <person name="Deegan J."/>
            <person name="Clutterbuck J."/>
            <person name="Andersen M.R."/>
            <person name="Archer D."/>
            <person name="Bencina M."/>
            <person name="Braus G."/>
            <person name="Coutinho P."/>
            <person name="von Dohren H."/>
            <person name="Doonan J."/>
            <person name="Driessen A.J."/>
            <person name="Durek P."/>
            <person name="Espeso E."/>
            <person name="Fekete E."/>
            <person name="Flipphi M."/>
            <person name="Estrada C.G."/>
            <person name="Geysens S."/>
            <person name="Goldman G."/>
            <person name="de Groot P.W."/>
            <person name="Hansen K."/>
            <person name="Harris S.D."/>
            <person name="Heinekamp T."/>
            <person name="Helmstaedt K."/>
            <person name="Henrissat B."/>
            <person name="Hofmann G."/>
            <person name="Homan T."/>
            <person name="Horio T."/>
            <person name="Horiuchi H."/>
            <person name="James S."/>
            <person name="Jones M."/>
            <person name="Karaffa L."/>
            <person name="Karanyi Z."/>
            <person name="Kato M."/>
            <person name="Keller N."/>
            <person name="Kelly D.E."/>
            <person name="Kiel J.A."/>
            <person name="Kim J.M."/>
            <person name="van der Klei I.J."/>
            <person name="Klis F.M."/>
            <person name="Kovalchuk A."/>
            <person name="Krasevec N."/>
            <person name="Kubicek C.P."/>
            <person name="Liu B."/>
            <person name="Maccabe A."/>
            <person name="Meyer V."/>
            <person name="Mirabito P."/>
            <person name="Miskei M."/>
            <person name="Mos M."/>
            <person name="Mullins J."/>
            <person name="Nelson D.R."/>
            <person name="Nielsen J."/>
            <person name="Oakley B.R."/>
            <person name="Osmani S.A."/>
            <person name="Pakula T."/>
            <person name="Paszewski A."/>
            <person name="Paulsen I."/>
            <person name="Pilsyk S."/>
            <person name="Pocsi I."/>
            <person name="Punt P.J."/>
            <person name="Ram A.F."/>
            <person name="Ren Q."/>
            <person name="Robellet X."/>
            <person name="Robson G."/>
            <person name="Seiboth B."/>
            <person name="van Solingen P."/>
            <person name="Specht T."/>
            <person name="Sun J."/>
            <person name="Taheri-Talesh N."/>
            <person name="Takeshita N."/>
            <person name="Ussery D."/>
            <person name="vanKuyk P.A."/>
            <person name="Visser H."/>
            <person name="van de Vondervoort P.J."/>
            <person name="de Vries R.P."/>
            <person name="Walton J."/>
            <person name="Xiang X."/>
            <person name="Xiong Y."/>
            <person name="Zeng A.P."/>
            <person name="Brandt B.W."/>
            <person name="Cornell M.J."/>
            <person name="van den Hondel C.A."/>
            <person name="Visser J."/>
            <person name="Oliver S.G."/>
            <person name="Turner G."/>
        </authorList>
    </citation>
    <scope>GENOME REANNOTATION</scope>
    <source>
        <strain>FGSC A4 / ATCC 38163 / CBS 112.46 / NRRL 194 / M139</strain>
    </source>
</reference>
<evidence type="ECO:0000250" key="1"/>
<evidence type="ECO:0000255" key="2">
    <source>
        <dbReference type="PROSITE-ProRule" id="PRU00541"/>
    </source>
</evidence>
<evidence type="ECO:0000255" key="3">
    <source>
        <dbReference type="PROSITE-ProRule" id="PRU00542"/>
    </source>
</evidence>
<evidence type="ECO:0000256" key="4">
    <source>
        <dbReference type="SAM" id="MobiDB-lite"/>
    </source>
</evidence>
<evidence type="ECO:0000305" key="5"/>
<accession>Q5BGX6</accession>
<accession>C8VUV7</accession>
<feature type="chain" id="PRO_0000232255" description="ATP-dependent RNA helicase dbp7">
    <location>
        <begin position="1"/>
        <end position="778"/>
    </location>
</feature>
<feature type="domain" description="Helicase ATP-binding" evidence="2">
    <location>
        <begin position="184"/>
        <end position="385"/>
    </location>
</feature>
<feature type="domain" description="Helicase C-terminal" evidence="3">
    <location>
        <begin position="411"/>
        <end position="625"/>
    </location>
</feature>
<feature type="region of interest" description="Disordered" evidence="4">
    <location>
        <begin position="20"/>
        <end position="144"/>
    </location>
</feature>
<feature type="region of interest" description="Disordered" evidence="4">
    <location>
        <begin position="470"/>
        <end position="503"/>
    </location>
</feature>
<feature type="region of interest" description="Disordered" evidence="4">
    <location>
        <begin position="700"/>
        <end position="778"/>
    </location>
</feature>
<feature type="short sequence motif" description="Q motif">
    <location>
        <begin position="151"/>
        <end position="180"/>
    </location>
</feature>
<feature type="short sequence motif" description="DEAD box">
    <location>
        <begin position="321"/>
        <end position="324"/>
    </location>
</feature>
<feature type="compositionally biased region" description="Basic and acidic residues" evidence="4">
    <location>
        <begin position="47"/>
        <end position="58"/>
    </location>
</feature>
<feature type="compositionally biased region" description="Polar residues" evidence="4">
    <location>
        <begin position="61"/>
        <end position="72"/>
    </location>
</feature>
<feature type="compositionally biased region" description="Gly residues" evidence="4">
    <location>
        <begin position="92"/>
        <end position="110"/>
    </location>
</feature>
<feature type="compositionally biased region" description="Basic and acidic residues" evidence="4">
    <location>
        <begin position="125"/>
        <end position="140"/>
    </location>
</feature>
<feature type="compositionally biased region" description="Acidic residues" evidence="4">
    <location>
        <begin position="470"/>
        <end position="479"/>
    </location>
</feature>
<feature type="compositionally biased region" description="Basic and acidic residues" evidence="4">
    <location>
        <begin position="480"/>
        <end position="492"/>
    </location>
</feature>
<feature type="compositionally biased region" description="Basic and acidic residues" evidence="4">
    <location>
        <begin position="709"/>
        <end position="724"/>
    </location>
</feature>
<feature type="binding site" evidence="2">
    <location>
        <begin position="197"/>
        <end position="204"/>
    </location>
    <ligand>
        <name>ATP</name>
        <dbReference type="ChEBI" id="CHEBI:30616"/>
    </ligand>
</feature>
<keyword id="KW-0067">ATP-binding</keyword>
<keyword id="KW-0347">Helicase</keyword>
<keyword id="KW-0378">Hydrolase</keyword>
<keyword id="KW-0547">Nucleotide-binding</keyword>
<keyword id="KW-0539">Nucleus</keyword>
<keyword id="KW-1185">Reference proteome</keyword>
<keyword id="KW-0690">Ribosome biogenesis</keyword>
<keyword id="KW-0694">RNA-binding</keyword>
<keyword id="KW-0698">rRNA processing</keyword>
<sequence>MADDGMLLNFALPSDVIKPQTKIKGGSWRERLSVKKIAARRATNPKRTADGDGNKDGNESGPRNPNRIQVSGSRPAKRQKTDGGFQKLGEGQAHGQGSGQSKGPKKGQGGSVVSSLFSKNPRPRNAVEEDKNDEPMEDAKPTNAPLIDGLDTFTNLGLSPTLAAHLLTKLELKAPTAIQKASITQLLKEETDAFIQAETGSGKTLAYLLPLVQRIMALSRAKNEGDAKGDTSVHRDSGLFAIILAPTRELCKQISVVLEGLLRCAHWIVAGTVIGGEKKKSEKARLRKGLNILVATPGRLADHLENTQALDVSNVRWLVLDEGDRLMELGFEKELQEIISKLDARQRPSRIPGVPAKRATILCSATLKMNVQKLGEISLKDAVHIKADPADEDGEKTAEDKDGDAFRVPAQLKQSYAIVAAKLRLVTLTAFMKRTFMRKGSVMKAIIFVSCADSVNFHFEVFTRKLAEQLEGDNPDEGSDSEHEKEKEKEKPTPASTHGTVAPATAFSNSSNAVTMYKLHGSLPQHVRTSTLSSFAKNRDPSVLICTDVASRGLDLPNVDLVVEYDPAFSADEHLHRIGRTARLGRDGRALVFLLPGCEENYVEILKRGYRDGGKALTRSTTDDILKRGFGGNIESQKWQLELERWALDNPEYLEMARRAYQSHIRAYATHVANERHIFNIKELHLGHLAKSFALRDRPGKINVPGLRPGKEDTKKDFKAERKSAGGKKRKATGYGGGRDDDDDDDRPSATTDTTLAAQKMRAKMKEQLAGASEFNLA</sequence>
<comment type="function">
    <text evidence="1">ATP-binding RNA helicase involved in the biogenesis of 60S ribosomal subunits and is required for the normal formation of 25S and 5.8S rRNAs.</text>
</comment>
<comment type="catalytic activity">
    <reaction>
        <text>ATP + H2O = ADP + phosphate + H(+)</text>
        <dbReference type="Rhea" id="RHEA:13065"/>
        <dbReference type="ChEBI" id="CHEBI:15377"/>
        <dbReference type="ChEBI" id="CHEBI:15378"/>
        <dbReference type="ChEBI" id="CHEBI:30616"/>
        <dbReference type="ChEBI" id="CHEBI:43474"/>
        <dbReference type="ChEBI" id="CHEBI:456216"/>
        <dbReference type="EC" id="3.6.4.13"/>
    </reaction>
</comment>
<comment type="subcellular location">
    <subcellularLocation>
        <location evidence="1">Nucleus</location>
        <location evidence="1">Nucleolus</location>
    </subcellularLocation>
</comment>
<comment type="domain">
    <text>The Q motif is unique to and characteristic of the DEAD box family of RNA helicases and controls ATP binding and hydrolysis.</text>
</comment>
<comment type="miscellaneous">
    <text>Present with 1460 molecules/cell in log phase SD medium.</text>
</comment>
<comment type="similarity">
    <text evidence="5">Belongs to the DEAD box helicase family. DDX31/DBP7 subfamily.</text>
</comment>
<organism>
    <name type="scientific">Emericella nidulans (strain FGSC A4 / ATCC 38163 / CBS 112.46 / NRRL 194 / M139)</name>
    <name type="common">Aspergillus nidulans</name>
    <dbReference type="NCBI Taxonomy" id="227321"/>
    <lineage>
        <taxon>Eukaryota</taxon>
        <taxon>Fungi</taxon>
        <taxon>Dikarya</taxon>
        <taxon>Ascomycota</taxon>
        <taxon>Pezizomycotina</taxon>
        <taxon>Eurotiomycetes</taxon>
        <taxon>Eurotiomycetidae</taxon>
        <taxon>Eurotiales</taxon>
        <taxon>Aspergillaceae</taxon>
        <taxon>Aspergillus</taxon>
        <taxon>Aspergillus subgen. Nidulantes</taxon>
    </lineage>
</organism>
<protein>
    <recommendedName>
        <fullName>ATP-dependent RNA helicase dbp7</fullName>
        <ecNumber>3.6.4.13</ecNumber>
    </recommendedName>
</protein>
<dbReference type="EC" id="3.6.4.13"/>
<dbReference type="EMBL" id="AACD01000005">
    <property type="protein sequence ID" value="EAA66077.1"/>
    <property type="molecule type" value="Genomic_DNA"/>
</dbReference>
<dbReference type="EMBL" id="BN001308">
    <property type="protein sequence ID" value="CBF89980.1"/>
    <property type="molecule type" value="Genomic_DNA"/>
</dbReference>
<dbReference type="RefSeq" id="XP_657808.1">
    <property type="nucleotide sequence ID" value="XM_652716.1"/>
</dbReference>
<dbReference type="SMR" id="Q5BGX6"/>
<dbReference type="FunCoup" id="Q5BGX6">
    <property type="interactions" value="732"/>
</dbReference>
<dbReference type="STRING" id="227321.Q5BGX6"/>
<dbReference type="EnsemblFungi" id="CBF89980">
    <property type="protein sequence ID" value="CBF89980"/>
    <property type="gene ID" value="ANIA_00204"/>
</dbReference>
<dbReference type="KEGG" id="ani:ANIA_00204"/>
<dbReference type="eggNOG" id="KOG0348">
    <property type="taxonomic scope" value="Eukaryota"/>
</dbReference>
<dbReference type="HOGENOM" id="CLU_003041_26_2_1"/>
<dbReference type="InParanoid" id="Q5BGX6"/>
<dbReference type="OMA" id="AVHIKAD"/>
<dbReference type="OrthoDB" id="422663at2759"/>
<dbReference type="Proteomes" id="UP000000560">
    <property type="component" value="Chromosome VIII"/>
</dbReference>
<dbReference type="GO" id="GO:0005730">
    <property type="term" value="C:nucleolus"/>
    <property type="evidence" value="ECO:0007669"/>
    <property type="project" value="UniProtKB-SubCell"/>
</dbReference>
<dbReference type="GO" id="GO:0005634">
    <property type="term" value="C:nucleus"/>
    <property type="evidence" value="ECO:0000318"/>
    <property type="project" value="GO_Central"/>
</dbReference>
<dbReference type="GO" id="GO:0005524">
    <property type="term" value="F:ATP binding"/>
    <property type="evidence" value="ECO:0007669"/>
    <property type="project" value="UniProtKB-KW"/>
</dbReference>
<dbReference type="GO" id="GO:0016887">
    <property type="term" value="F:ATP hydrolysis activity"/>
    <property type="evidence" value="ECO:0007669"/>
    <property type="project" value="RHEA"/>
</dbReference>
<dbReference type="GO" id="GO:0003723">
    <property type="term" value="F:RNA binding"/>
    <property type="evidence" value="ECO:0007669"/>
    <property type="project" value="UniProtKB-KW"/>
</dbReference>
<dbReference type="GO" id="GO:0003724">
    <property type="term" value="F:RNA helicase activity"/>
    <property type="evidence" value="ECO:0007669"/>
    <property type="project" value="UniProtKB-EC"/>
</dbReference>
<dbReference type="GO" id="GO:0000464">
    <property type="term" value="P:endonucleolytic cleavage in ITS1 upstream of 5.8S rRNA from tricistronic rRNA transcript (SSU-rRNA, 5.8S rRNA, LSU-rRNA)"/>
    <property type="evidence" value="ECO:0007669"/>
    <property type="project" value="EnsemblFungi"/>
</dbReference>
<dbReference type="GO" id="GO:0042254">
    <property type="term" value="P:ribosome biogenesis"/>
    <property type="evidence" value="ECO:0000318"/>
    <property type="project" value="GO_Central"/>
</dbReference>
<dbReference type="CDD" id="cd17949">
    <property type="entry name" value="DEADc_DDX31"/>
    <property type="match status" value="1"/>
</dbReference>
<dbReference type="CDD" id="cd18787">
    <property type="entry name" value="SF2_C_DEAD"/>
    <property type="match status" value="1"/>
</dbReference>
<dbReference type="Gene3D" id="3.40.50.300">
    <property type="entry name" value="P-loop containing nucleotide triphosphate hydrolases"/>
    <property type="match status" value="2"/>
</dbReference>
<dbReference type="InterPro" id="IPR011545">
    <property type="entry name" value="DEAD/DEAH_box_helicase_dom"/>
</dbReference>
<dbReference type="InterPro" id="IPR014001">
    <property type="entry name" value="Helicase_ATP-bd"/>
</dbReference>
<dbReference type="InterPro" id="IPR001650">
    <property type="entry name" value="Helicase_C-like"/>
</dbReference>
<dbReference type="InterPro" id="IPR027417">
    <property type="entry name" value="P-loop_NTPase"/>
</dbReference>
<dbReference type="InterPro" id="IPR025313">
    <property type="entry name" value="SPB4-like_CTE"/>
</dbReference>
<dbReference type="PANTHER" id="PTHR24031">
    <property type="entry name" value="RNA HELICASE"/>
    <property type="match status" value="1"/>
</dbReference>
<dbReference type="Pfam" id="PF13959">
    <property type="entry name" value="CTE_SPB4"/>
    <property type="match status" value="1"/>
</dbReference>
<dbReference type="Pfam" id="PF00270">
    <property type="entry name" value="DEAD"/>
    <property type="match status" value="1"/>
</dbReference>
<dbReference type="Pfam" id="PF00271">
    <property type="entry name" value="Helicase_C"/>
    <property type="match status" value="1"/>
</dbReference>
<dbReference type="SMART" id="SM00487">
    <property type="entry name" value="DEXDc"/>
    <property type="match status" value="1"/>
</dbReference>
<dbReference type="SMART" id="SM01178">
    <property type="entry name" value="DUF4217"/>
    <property type="match status" value="1"/>
</dbReference>
<dbReference type="SMART" id="SM00490">
    <property type="entry name" value="HELICc"/>
    <property type="match status" value="1"/>
</dbReference>
<dbReference type="SUPFAM" id="SSF52540">
    <property type="entry name" value="P-loop containing nucleoside triphosphate hydrolases"/>
    <property type="match status" value="2"/>
</dbReference>
<dbReference type="PROSITE" id="PS51192">
    <property type="entry name" value="HELICASE_ATP_BIND_1"/>
    <property type="match status" value="1"/>
</dbReference>
<dbReference type="PROSITE" id="PS51194">
    <property type="entry name" value="HELICASE_CTER"/>
    <property type="match status" value="1"/>
</dbReference>
<dbReference type="PROSITE" id="PS51195">
    <property type="entry name" value="Q_MOTIF"/>
    <property type="match status" value="1"/>
</dbReference>
<gene>
    <name type="primary">dbp7</name>
    <name type="ORF">AN0204</name>
</gene>
<name>DBP7_EMENI</name>
<proteinExistence type="inferred from homology"/>